<dbReference type="EC" id="5.1.1.1" evidence="1"/>
<dbReference type="EMBL" id="AM233362">
    <property type="protein sequence ID" value="CAJ79777.1"/>
    <property type="molecule type" value="Genomic_DNA"/>
</dbReference>
<dbReference type="RefSeq" id="WP_003016550.1">
    <property type="nucleotide sequence ID" value="NZ_CP009694.1"/>
</dbReference>
<dbReference type="SMR" id="Q2A2P9"/>
<dbReference type="KEGG" id="ftl:FTL_1338"/>
<dbReference type="UniPathway" id="UPA00042">
    <property type="reaction ID" value="UER00497"/>
</dbReference>
<dbReference type="Proteomes" id="UP000001944">
    <property type="component" value="Chromosome"/>
</dbReference>
<dbReference type="GO" id="GO:0005829">
    <property type="term" value="C:cytosol"/>
    <property type="evidence" value="ECO:0007669"/>
    <property type="project" value="TreeGrafter"/>
</dbReference>
<dbReference type="GO" id="GO:0008784">
    <property type="term" value="F:alanine racemase activity"/>
    <property type="evidence" value="ECO:0007669"/>
    <property type="project" value="UniProtKB-UniRule"/>
</dbReference>
<dbReference type="GO" id="GO:0030170">
    <property type="term" value="F:pyridoxal phosphate binding"/>
    <property type="evidence" value="ECO:0007669"/>
    <property type="project" value="UniProtKB-UniRule"/>
</dbReference>
<dbReference type="GO" id="GO:0030632">
    <property type="term" value="P:D-alanine biosynthetic process"/>
    <property type="evidence" value="ECO:0007669"/>
    <property type="project" value="UniProtKB-UniRule"/>
</dbReference>
<dbReference type="CDD" id="cd00430">
    <property type="entry name" value="PLPDE_III_AR"/>
    <property type="match status" value="1"/>
</dbReference>
<dbReference type="FunFam" id="3.20.20.10:FF:000002">
    <property type="entry name" value="Alanine racemase"/>
    <property type="match status" value="1"/>
</dbReference>
<dbReference type="Gene3D" id="3.20.20.10">
    <property type="entry name" value="Alanine racemase"/>
    <property type="match status" value="1"/>
</dbReference>
<dbReference type="Gene3D" id="2.40.37.10">
    <property type="entry name" value="Lyase, Ornithine Decarboxylase, Chain A, domain 1"/>
    <property type="match status" value="1"/>
</dbReference>
<dbReference type="HAMAP" id="MF_01201">
    <property type="entry name" value="Ala_racemase"/>
    <property type="match status" value="1"/>
</dbReference>
<dbReference type="InterPro" id="IPR000821">
    <property type="entry name" value="Ala_racemase"/>
</dbReference>
<dbReference type="InterPro" id="IPR009006">
    <property type="entry name" value="Ala_racemase/Decarboxylase_C"/>
</dbReference>
<dbReference type="InterPro" id="IPR011079">
    <property type="entry name" value="Ala_racemase_C"/>
</dbReference>
<dbReference type="InterPro" id="IPR001608">
    <property type="entry name" value="Ala_racemase_N"/>
</dbReference>
<dbReference type="InterPro" id="IPR029066">
    <property type="entry name" value="PLP-binding_barrel"/>
</dbReference>
<dbReference type="NCBIfam" id="TIGR00492">
    <property type="entry name" value="alr"/>
    <property type="match status" value="1"/>
</dbReference>
<dbReference type="PANTHER" id="PTHR30511">
    <property type="entry name" value="ALANINE RACEMASE"/>
    <property type="match status" value="1"/>
</dbReference>
<dbReference type="PANTHER" id="PTHR30511:SF0">
    <property type="entry name" value="ALANINE RACEMASE, CATABOLIC-RELATED"/>
    <property type="match status" value="1"/>
</dbReference>
<dbReference type="Pfam" id="PF00842">
    <property type="entry name" value="Ala_racemase_C"/>
    <property type="match status" value="1"/>
</dbReference>
<dbReference type="Pfam" id="PF01168">
    <property type="entry name" value="Ala_racemase_N"/>
    <property type="match status" value="1"/>
</dbReference>
<dbReference type="PRINTS" id="PR00992">
    <property type="entry name" value="ALARACEMASE"/>
</dbReference>
<dbReference type="SMART" id="SM01005">
    <property type="entry name" value="Ala_racemase_C"/>
    <property type="match status" value="1"/>
</dbReference>
<dbReference type="SUPFAM" id="SSF50621">
    <property type="entry name" value="Alanine racemase C-terminal domain-like"/>
    <property type="match status" value="1"/>
</dbReference>
<dbReference type="SUPFAM" id="SSF51419">
    <property type="entry name" value="PLP-binding barrel"/>
    <property type="match status" value="1"/>
</dbReference>
<keyword id="KW-0413">Isomerase</keyword>
<keyword id="KW-0663">Pyridoxal phosphate</keyword>
<keyword id="KW-1185">Reference proteome</keyword>
<accession>Q2A2P9</accession>
<evidence type="ECO:0000255" key="1">
    <source>
        <dbReference type="HAMAP-Rule" id="MF_01201"/>
    </source>
</evidence>
<reference key="1">
    <citation type="submission" date="2006-03" db="EMBL/GenBank/DDBJ databases">
        <title>Complete genome sequence of Francisella tularensis LVS (Live Vaccine Strain).</title>
        <authorList>
            <person name="Chain P."/>
            <person name="Larimer F."/>
            <person name="Land M."/>
            <person name="Stilwagen S."/>
            <person name="Larsson P."/>
            <person name="Bearden S."/>
            <person name="Chu M."/>
            <person name="Oyston P."/>
            <person name="Forsman M."/>
            <person name="Andersson S."/>
            <person name="Lindler L."/>
            <person name="Titball R."/>
            <person name="Garcia E."/>
        </authorList>
    </citation>
    <scope>NUCLEOTIDE SEQUENCE [LARGE SCALE GENOMIC DNA]</scope>
    <source>
        <strain>LVS</strain>
    </source>
</reference>
<gene>
    <name type="primary">alr</name>
    <name type="ordered locus">FTL_1338</name>
</gene>
<proteinExistence type="inferred from homology"/>
<name>ALR_FRATH</name>
<feature type="chain" id="PRO_1000073094" description="Alanine racemase">
    <location>
        <begin position="1"/>
        <end position="365"/>
    </location>
</feature>
<feature type="active site" description="Proton acceptor; specific for D-alanine" evidence="1">
    <location>
        <position position="32"/>
    </location>
</feature>
<feature type="active site" description="Proton acceptor; specific for L-alanine" evidence="1">
    <location>
        <position position="257"/>
    </location>
</feature>
<feature type="binding site" evidence="1">
    <location>
        <position position="128"/>
    </location>
    <ligand>
        <name>substrate</name>
    </ligand>
</feature>
<feature type="binding site" evidence="1">
    <location>
        <position position="305"/>
    </location>
    <ligand>
        <name>substrate</name>
    </ligand>
</feature>
<feature type="modified residue" description="N6-(pyridoxal phosphate)lysine" evidence="1">
    <location>
        <position position="32"/>
    </location>
</feature>
<sequence>MNILKISKQTLRNNIKIIREYIGNAKMCFPVKANAYGHGIEDIVENTHDLVDFFAVANSLEAFRVTAVAKNPVLVFGVIYYEYIEKMISENIRVSIQDYEYIEKLEQIAKELDKKVYAHININTGMNRMGVDYNDACRTIQRAYESDWLILEGVYSHLACADNRDHPTNIKQKNRFDSIVKFTKGLSQDIICHLSNSYGFLGQKGICYDMVRPGILSYGFLPEFYVDRVIREIKPIARLLSKVVKIITLQEGEGVGYSLIYRGFEGEQLAVIPIGYGDGFPRELGDRGFVNINDVMYPMAGRMSMDGLTVSLGINEYDVKVGDTVELISAIPRNRNSAFSIAKQTNTIEYDIMSTLNDRIIRKII</sequence>
<organism>
    <name type="scientific">Francisella tularensis subsp. holarctica (strain LVS)</name>
    <dbReference type="NCBI Taxonomy" id="376619"/>
    <lineage>
        <taxon>Bacteria</taxon>
        <taxon>Pseudomonadati</taxon>
        <taxon>Pseudomonadota</taxon>
        <taxon>Gammaproteobacteria</taxon>
        <taxon>Thiotrichales</taxon>
        <taxon>Francisellaceae</taxon>
        <taxon>Francisella</taxon>
    </lineage>
</organism>
<protein>
    <recommendedName>
        <fullName evidence="1">Alanine racemase</fullName>
        <ecNumber evidence="1">5.1.1.1</ecNumber>
    </recommendedName>
</protein>
<comment type="function">
    <text evidence="1">Catalyzes the interconversion of L-alanine and D-alanine. May also act on other amino acids.</text>
</comment>
<comment type="catalytic activity">
    <reaction evidence="1">
        <text>L-alanine = D-alanine</text>
        <dbReference type="Rhea" id="RHEA:20249"/>
        <dbReference type="ChEBI" id="CHEBI:57416"/>
        <dbReference type="ChEBI" id="CHEBI:57972"/>
        <dbReference type="EC" id="5.1.1.1"/>
    </reaction>
</comment>
<comment type="cofactor">
    <cofactor evidence="1">
        <name>pyridoxal 5'-phosphate</name>
        <dbReference type="ChEBI" id="CHEBI:597326"/>
    </cofactor>
</comment>
<comment type="pathway">
    <text evidence="1">Amino-acid biosynthesis; D-alanine biosynthesis; D-alanine from L-alanine: step 1/1.</text>
</comment>
<comment type="similarity">
    <text evidence="1">Belongs to the alanine racemase family.</text>
</comment>